<sequence length="444" mass="49075">MKLLLILLGALLAVLTIKRTSAVQGSNHLICYYDGTSYTREGLAKLTLNDLEPALQFCTHLVYGHAAINPSSNKLVSNNEKLDLDVGTGLYRTITGMKKKYPHLKVLLSVGGDKDEVDADNNKYLTLLESSNARIPFINSAHSMVKTYGFDGLELGWQFPKNKPKKVHGSIGKLWKGFKKIFTGDFIVDEKAEEHKEEFTALVRELKNALRPDGYILGLAVLPNVNSSLFYDVPAIVNNLDYVNLMAYDFQTPQRNPEMADFPAPIYELNERNPESNVNYQVQYWLQNHCPASKINVGIPSYGRAWKMTTDSGLTGLPPVSDADGPAAGGLQTQTEGLLSWPEVCAKLPNPANQHLKGADSPLRKVGDPTKRFGNYAYRSTDDKGENGIWVSYEDPDTAANKAAYVKTKGLGGVALVDLSFDDFRGACTGDKYPILRAIKFKFQ</sequence>
<name>IDGF4_GLOMM</name>
<comment type="function">
    <text evidence="1">Cooperates with insulin-like peptides to stimulate the proliferation, polarization and motility of imaginal disk cells. May act by stabilizing the binding of insulin-like peptides to its receptor through a simultaneous interaction with both molecules to form a multiprotein signaling complex (By similarity).</text>
</comment>
<comment type="subcellular location">
    <subcellularLocation>
        <location evidence="1">Secreted</location>
    </subcellularLocation>
</comment>
<comment type="PTM">
    <text evidence="1">Glycosylated.</text>
</comment>
<comment type="miscellaneous">
    <text>Lacks the typical Glu active site in position 158 that is replaced by a Gln residue, preventing the hydrolase activity. Its precise function remains unclear.</text>
</comment>
<comment type="similarity">
    <text evidence="4">Belongs to the glycosyl hydrolase 18 family. IDGF subfamily.</text>
</comment>
<keyword id="KW-0217">Developmental protein</keyword>
<keyword id="KW-1015">Disulfide bond</keyword>
<keyword id="KW-0325">Glycoprotein</keyword>
<keyword id="KW-0964">Secreted</keyword>
<keyword id="KW-0732">Signal</keyword>
<dbReference type="EMBL" id="DQ307196">
    <property type="protein sequence ID" value="ABC25096.1"/>
    <property type="molecule type" value="mRNA"/>
</dbReference>
<dbReference type="SMR" id="Q2PQM7"/>
<dbReference type="STRING" id="37546.Q2PQM7"/>
<dbReference type="CAZy" id="GH18">
    <property type="family name" value="Glycoside Hydrolase Family 18"/>
</dbReference>
<dbReference type="GlyCosmos" id="Q2PQM7">
    <property type="glycosylation" value="1 site, No reported glycans"/>
</dbReference>
<dbReference type="Proteomes" id="UP000092444">
    <property type="component" value="Unassembled WGS sequence"/>
</dbReference>
<dbReference type="GO" id="GO:0005576">
    <property type="term" value="C:extracellular region"/>
    <property type="evidence" value="ECO:0007669"/>
    <property type="project" value="UniProtKB-SubCell"/>
</dbReference>
<dbReference type="GO" id="GO:0008061">
    <property type="term" value="F:chitin binding"/>
    <property type="evidence" value="ECO:0007669"/>
    <property type="project" value="InterPro"/>
</dbReference>
<dbReference type="GO" id="GO:0004568">
    <property type="term" value="F:chitinase activity"/>
    <property type="evidence" value="ECO:0007669"/>
    <property type="project" value="TreeGrafter"/>
</dbReference>
<dbReference type="GO" id="GO:0005975">
    <property type="term" value="P:carbohydrate metabolic process"/>
    <property type="evidence" value="ECO:0007669"/>
    <property type="project" value="InterPro"/>
</dbReference>
<dbReference type="GO" id="GO:0006032">
    <property type="term" value="P:chitin catabolic process"/>
    <property type="evidence" value="ECO:0007669"/>
    <property type="project" value="TreeGrafter"/>
</dbReference>
<dbReference type="CDD" id="cd02873">
    <property type="entry name" value="GH18_IDGF"/>
    <property type="match status" value="1"/>
</dbReference>
<dbReference type="FunFam" id="3.10.50.10:FF:000007">
    <property type="entry name" value="chitinase-like protein Idgf4"/>
    <property type="match status" value="1"/>
</dbReference>
<dbReference type="FunFam" id="3.20.20.80:FF:000071">
    <property type="entry name" value="Imaginal disc growth factor"/>
    <property type="match status" value="1"/>
</dbReference>
<dbReference type="Gene3D" id="3.10.50.10">
    <property type="match status" value="1"/>
</dbReference>
<dbReference type="Gene3D" id="3.20.20.80">
    <property type="entry name" value="Glycosidases"/>
    <property type="match status" value="1"/>
</dbReference>
<dbReference type="InterPro" id="IPR011583">
    <property type="entry name" value="Chitinase_II/V-like_cat"/>
</dbReference>
<dbReference type="InterPro" id="IPR029070">
    <property type="entry name" value="Chitinase_insertion_sf"/>
</dbReference>
<dbReference type="InterPro" id="IPR001223">
    <property type="entry name" value="Glyco_hydro18_cat"/>
</dbReference>
<dbReference type="InterPro" id="IPR017853">
    <property type="entry name" value="Glycoside_hydrolase_SF"/>
</dbReference>
<dbReference type="InterPro" id="IPR050314">
    <property type="entry name" value="Glycosyl_Hydrlase_18"/>
</dbReference>
<dbReference type="InterPro" id="IPR015520">
    <property type="entry name" value="IDGF"/>
</dbReference>
<dbReference type="PANTHER" id="PTHR11177">
    <property type="entry name" value="CHITINASE"/>
    <property type="match status" value="1"/>
</dbReference>
<dbReference type="PANTHER" id="PTHR11177:SF235">
    <property type="entry name" value="CHITINASE-LIKE PROTEIN IDGF1-RELATED"/>
    <property type="match status" value="1"/>
</dbReference>
<dbReference type="Pfam" id="PF00704">
    <property type="entry name" value="Glyco_hydro_18"/>
    <property type="match status" value="1"/>
</dbReference>
<dbReference type="SMART" id="SM00636">
    <property type="entry name" value="Glyco_18"/>
    <property type="match status" value="1"/>
</dbReference>
<dbReference type="SUPFAM" id="SSF51445">
    <property type="entry name" value="(Trans)glycosidases"/>
    <property type="match status" value="1"/>
</dbReference>
<dbReference type="SUPFAM" id="SSF54556">
    <property type="entry name" value="Chitinase insertion domain"/>
    <property type="match status" value="1"/>
</dbReference>
<dbReference type="PROSITE" id="PS51910">
    <property type="entry name" value="GH18_2"/>
    <property type="match status" value="1"/>
</dbReference>
<organism>
    <name type="scientific">Glossina morsitans morsitans</name>
    <name type="common">Savannah tsetse fly</name>
    <dbReference type="NCBI Taxonomy" id="37546"/>
    <lineage>
        <taxon>Eukaryota</taxon>
        <taxon>Metazoa</taxon>
        <taxon>Ecdysozoa</taxon>
        <taxon>Arthropoda</taxon>
        <taxon>Hexapoda</taxon>
        <taxon>Insecta</taxon>
        <taxon>Pterygota</taxon>
        <taxon>Neoptera</taxon>
        <taxon>Endopterygota</taxon>
        <taxon>Diptera</taxon>
        <taxon>Brachycera</taxon>
        <taxon>Muscomorpha</taxon>
        <taxon>Hippoboscoidea</taxon>
        <taxon>Glossinidae</taxon>
        <taxon>Glossina</taxon>
    </lineage>
</organism>
<proteinExistence type="evidence at transcript level"/>
<evidence type="ECO:0000250" key="1"/>
<evidence type="ECO:0000255" key="2"/>
<evidence type="ECO:0000255" key="3">
    <source>
        <dbReference type="PROSITE-ProRule" id="PRU01258"/>
    </source>
</evidence>
<evidence type="ECO:0000305" key="4"/>
<feature type="signal peptide" evidence="2">
    <location>
        <begin position="1"/>
        <end position="22"/>
    </location>
</feature>
<feature type="chain" id="PRO_0000291640" description="Chitinase-like protein Idgf4">
    <location>
        <begin position="23"/>
        <end position="444"/>
    </location>
</feature>
<feature type="domain" description="GH18" evidence="3">
    <location>
        <begin position="27"/>
        <end position="444"/>
    </location>
</feature>
<feature type="glycosylation site" description="N-linked (GlcNAc...) asparagine" evidence="2">
    <location>
        <position position="226"/>
    </location>
</feature>
<feature type="disulfide bond" evidence="3">
    <location>
        <begin position="31"/>
        <end position="58"/>
    </location>
</feature>
<feature type="disulfide bond" evidence="1">
    <location>
        <begin position="345"/>
        <end position="428"/>
    </location>
</feature>
<protein>
    <recommendedName>
        <fullName>Chitinase-like protein Idgf4</fullName>
    </recommendedName>
    <alternativeName>
        <fullName>Imaginal disk growth factor protein 4</fullName>
    </alternativeName>
</protein>
<accession>Q2PQM7</accession>
<gene>
    <name type="primary">Idgf4</name>
</gene>
<reference key="1">
    <citation type="journal article" date="2006" name="Insect Mol. Biol.">
        <title>Analysis of fat body transcriptome from the adult tsetse fly, Glossina morsitans morsitans.</title>
        <authorList>
            <person name="Attardo G.M."/>
            <person name="Strickler-Dinglasan P."/>
            <person name="Perkin S.A.H."/>
            <person name="Caler E."/>
            <person name="Bonaldo M.F."/>
            <person name="Soares M.B."/>
            <person name="El-Sayeed N.M.A."/>
            <person name="Aksoy S."/>
        </authorList>
    </citation>
    <scope>NUCLEOTIDE SEQUENCE [LARGE SCALE MRNA]</scope>
    <source>
        <tissue>Fat body</tissue>
    </source>
</reference>